<protein>
    <recommendedName>
        <fullName evidence="1">Malate dehydrogenase</fullName>
        <ecNumber evidence="1">1.1.1.37</ecNumber>
    </recommendedName>
</protein>
<proteinExistence type="inferred from homology"/>
<evidence type="ECO:0000255" key="1">
    <source>
        <dbReference type="HAMAP-Rule" id="MF_00487"/>
    </source>
</evidence>
<gene>
    <name evidence="1" type="primary">mdh</name>
    <name type="ordered locus">FTM_1149</name>
</gene>
<sequence length="319" mass="34105">MARKKITLVGAGNIGGTLAHLALIKQLGDVVLFDIAQGMPNGKALDLLQTCPIEGVDFKVRGTNDYKDLENSDVVIVTAGVPRKPGMSRDDLLGINIKVMQTVGEGIKHNCPNAFVICITNPLDIMVNMLQKFSGVPDNKIVGMAGVLDSARFRTFLADELNVSVQQVQAYVMGGHGDTMVPLTKMSNVAGVSLEQLVKEGKLKQERLDAIVSRTRSGGGEIVALLKTGSAYYAPAAAGIQMAESFLKDKKMILPCAAKVKAGMYGLDEDLFVGVPTEISANGVRPIEVEISDKEREQLQVSINAVKDLNKVAAEILAK</sequence>
<keyword id="KW-0520">NAD</keyword>
<keyword id="KW-0560">Oxidoreductase</keyword>
<keyword id="KW-0816">Tricarboxylic acid cycle</keyword>
<accession>B2SH29</accession>
<reference key="1">
    <citation type="journal article" date="2009" name="PLoS Pathog.">
        <title>Molecular evolutionary consequences of niche restriction in Francisella tularensis, a facultative intracellular pathogen.</title>
        <authorList>
            <person name="Larsson P."/>
            <person name="Elfsmark D."/>
            <person name="Svensson K."/>
            <person name="Wikstroem P."/>
            <person name="Forsman M."/>
            <person name="Brettin T."/>
            <person name="Keim P."/>
            <person name="Johansson A."/>
        </authorList>
    </citation>
    <scope>NUCLEOTIDE SEQUENCE [LARGE SCALE GENOMIC DNA]</scope>
    <source>
        <strain>FSC147</strain>
    </source>
</reference>
<dbReference type="EC" id="1.1.1.37" evidence="1"/>
<dbReference type="EMBL" id="CP000915">
    <property type="protein sequence ID" value="ACD31037.1"/>
    <property type="molecule type" value="Genomic_DNA"/>
</dbReference>
<dbReference type="SMR" id="B2SH29"/>
<dbReference type="KEGG" id="ftm:FTM_1149"/>
<dbReference type="HOGENOM" id="CLU_045401_2_1_6"/>
<dbReference type="GO" id="GO:0004459">
    <property type="term" value="F:L-lactate dehydrogenase activity"/>
    <property type="evidence" value="ECO:0007669"/>
    <property type="project" value="TreeGrafter"/>
</dbReference>
<dbReference type="GO" id="GO:0030060">
    <property type="term" value="F:L-malate dehydrogenase (NAD+) activity"/>
    <property type="evidence" value="ECO:0007669"/>
    <property type="project" value="UniProtKB-UniRule"/>
</dbReference>
<dbReference type="GO" id="GO:0006089">
    <property type="term" value="P:lactate metabolic process"/>
    <property type="evidence" value="ECO:0007669"/>
    <property type="project" value="TreeGrafter"/>
</dbReference>
<dbReference type="GO" id="GO:0006099">
    <property type="term" value="P:tricarboxylic acid cycle"/>
    <property type="evidence" value="ECO:0007669"/>
    <property type="project" value="UniProtKB-UniRule"/>
</dbReference>
<dbReference type="CDD" id="cd01339">
    <property type="entry name" value="LDH-like_MDH"/>
    <property type="match status" value="1"/>
</dbReference>
<dbReference type="FunFam" id="3.40.50.720:FF:000018">
    <property type="entry name" value="Malate dehydrogenase"/>
    <property type="match status" value="1"/>
</dbReference>
<dbReference type="FunFam" id="3.90.110.10:FF:000004">
    <property type="entry name" value="Malate dehydrogenase"/>
    <property type="match status" value="1"/>
</dbReference>
<dbReference type="Gene3D" id="3.90.110.10">
    <property type="entry name" value="Lactate dehydrogenase/glycoside hydrolase, family 4, C-terminal"/>
    <property type="match status" value="1"/>
</dbReference>
<dbReference type="Gene3D" id="3.40.50.720">
    <property type="entry name" value="NAD(P)-binding Rossmann-like Domain"/>
    <property type="match status" value="1"/>
</dbReference>
<dbReference type="HAMAP" id="MF_00487">
    <property type="entry name" value="Malate_dehydrog_3"/>
    <property type="match status" value="1"/>
</dbReference>
<dbReference type="InterPro" id="IPR001557">
    <property type="entry name" value="L-lactate/malate_DH"/>
</dbReference>
<dbReference type="InterPro" id="IPR022383">
    <property type="entry name" value="Lactate/malate_DH_C"/>
</dbReference>
<dbReference type="InterPro" id="IPR001236">
    <property type="entry name" value="Lactate/malate_DH_N"/>
</dbReference>
<dbReference type="InterPro" id="IPR015955">
    <property type="entry name" value="Lactate_DH/Glyco_Ohase_4_C"/>
</dbReference>
<dbReference type="InterPro" id="IPR011275">
    <property type="entry name" value="Malate_DH_type3"/>
</dbReference>
<dbReference type="InterPro" id="IPR036291">
    <property type="entry name" value="NAD(P)-bd_dom_sf"/>
</dbReference>
<dbReference type="NCBIfam" id="TIGR01763">
    <property type="entry name" value="MalateDH_bact"/>
    <property type="match status" value="1"/>
</dbReference>
<dbReference type="NCBIfam" id="NF004863">
    <property type="entry name" value="PRK06223.1"/>
    <property type="match status" value="1"/>
</dbReference>
<dbReference type="PANTHER" id="PTHR43128">
    <property type="entry name" value="L-2-HYDROXYCARBOXYLATE DEHYDROGENASE (NAD(P)(+))"/>
    <property type="match status" value="1"/>
</dbReference>
<dbReference type="PANTHER" id="PTHR43128:SF16">
    <property type="entry name" value="L-LACTATE DEHYDROGENASE"/>
    <property type="match status" value="1"/>
</dbReference>
<dbReference type="Pfam" id="PF02866">
    <property type="entry name" value="Ldh_1_C"/>
    <property type="match status" value="1"/>
</dbReference>
<dbReference type="Pfam" id="PF00056">
    <property type="entry name" value="Ldh_1_N"/>
    <property type="match status" value="1"/>
</dbReference>
<dbReference type="PIRSF" id="PIRSF000102">
    <property type="entry name" value="Lac_mal_DH"/>
    <property type="match status" value="1"/>
</dbReference>
<dbReference type="PRINTS" id="PR00086">
    <property type="entry name" value="LLDHDRGNASE"/>
</dbReference>
<dbReference type="SUPFAM" id="SSF56327">
    <property type="entry name" value="LDH C-terminal domain-like"/>
    <property type="match status" value="1"/>
</dbReference>
<dbReference type="SUPFAM" id="SSF51735">
    <property type="entry name" value="NAD(P)-binding Rossmann-fold domains"/>
    <property type="match status" value="1"/>
</dbReference>
<feature type="chain" id="PRO_1000126132" description="Malate dehydrogenase">
    <location>
        <begin position="1"/>
        <end position="319"/>
    </location>
</feature>
<feature type="active site" description="Proton acceptor" evidence="1">
    <location>
        <position position="176"/>
    </location>
</feature>
<feature type="binding site" evidence="1">
    <location>
        <begin position="10"/>
        <end position="15"/>
    </location>
    <ligand>
        <name>NAD(+)</name>
        <dbReference type="ChEBI" id="CHEBI:57540"/>
    </ligand>
</feature>
<feature type="binding site" evidence="1">
    <location>
        <position position="34"/>
    </location>
    <ligand>
        <name>NAD(+)</name>
        <dbReference type="ChEBI" id="CHEBI:57540"/>
    </ligand>
</feature>
<feature type="binding site" evidence="1">
    <location>
        <position position="83"/>
    </location>
    <ligand>
        <name>substrate</name>
    </ligand>
</feature>
<feature type="binding site" evidence="1">
    <location>
        <position position="89"/>
    </location>
    <ligand>
        <name>substrate</name>
    </ligand>
</feature>
<feature type="binding site" evidence="1">
    <location>
        <position position="96"/>
    </location>
    <ligand>
        <name>NAD(+)</name>
        <dbReference type="ChEBI" id="CHEBI:57540"/>
    </ligand>
</feature>
<feature type="binding site" evidence="1">
    <location>
        <begin position="119"/>
        <end position="121"/>
    </location>
    <ligand>
        <name>NAD(+)</name>
        <dbReference type="ChEBI" id="CHEBI:57540"/>
    </ligand>
</feature>
<feature type="binding site" evidence="1">
    <location>
        <position position="121"/>
    </location>
    <ligand>
        <name>substrate</name>
    </ligand>
</feature>
<feature type="binding site" evidence="1">
    <location>
        <position position="152"/>
    </location>
    <ligand>
        <name>substrate</name>
    </ligand>
</feature>
<name>MDH_FRATM</name>
<organism>
    <name type="scientific">Francisella tularensis subsp. mediasiatica (strain FSC147)</name>
    <dbReference type="NCBI Taxonomy" id="441952"/>
    <lineage>
        <taxon>Bacteria</taxon>
        <taxon>Pseudomonadati</taxon>
        <taxon>Pseudomonadota</taxon>
        <taxon>Gammaproteobacteria</taxon>
        <taxon>Thiotrichales</taxon>
        <taxon>Francisellaceae</taxon>
        <taxon>Francisella</taxon>
    </lineage>
</organism>
<comment type="function">
    <text evidence="1">Catalyzes the reversible oxidation of malate to oxaloacetate.</text>
</comment>
<comment type="catalytic activity">
    <reaction evidence="1">
        <text>(S)-malate + NAD(+) = oxaloacetate + NADH + H(+)</text>
        <dbReference type="Rhea" id="RHEA:21432"/>
        <dbReference type="ChEBI" id="CHEBI:15378"/>
        <dbReference type="ChEBI" id="CHEBI:15589"/>
        <dbReference type="ChEBI" id="CHEBI:16452"/>
        <dbReference type="ChEBI" id="CHEBI:57540"/>
        <dbReference type="ChEBI" id="CHEBI:57945"/>
        <dbReference type="EC" id="1.1.1.37"/>
    </reaction>
</comment>
<comment type="similarity">
    <text evidence="1">Belongs to the LDH/MDH superfamily. MDH type 3 family.</text>
</comment>